<proteinExistence type="inferred from homology"/>
<sequence length="104" mass="11389">MKNPFEAMKQLKKLQEKMAKIEEELEQTLVEGTAGGGVVKIIMNAKEEIKEVKIDPEVVNKDEVDILEDLIAAALRDALTKAKEKSAEKMGSLADGLPLPPGLF</sequence>
<evidence type="ECO:0000255" key="1">
    <source>
        <dbReference type="HAMAP-Rule" id="MF_00274"/>
    </source>
</evidence>
<evidence type="ECO:0000256" key="2">
    <source>
        <dbReference type="SAM" id="MobiDB-lite"/>
    </source>
</evidence>
<accession>B5YCC8</accession>
<dbReference type="EMBL" id="CP001146">
    <property type="protein sequence ID" value="ACI19177.1"/>
    <property type="molecule type" value="Genomic_DNA"/>
</dbReference>
<dbReference type="RefSeq" id="WP_012547809.1">
    <property type="nucleotide sequence ID" value="NC_011297.1"/>
</dbReference>
<dbReference type="SMR" id="B5YCC8"/>
<dbReference type="STRING" id="309799.DICTH_1981"/>
<dbReference type="PaxDb" id="309799-DICTH_1981"/>
<dbReference type="KEGG" id="dth:DICTH_1981"/>
<dbReference type="eggNOG" id="COG0718">
    <property type="taxonomic scope" value="Bacteria"/>
</dbReference>
<dbReference type="HOGENOM" id="CLU_140930_0_1_0"/>
<dbReference type="OrthoDB" id="9803080at2"/>
<dbReference type="Proteomes" id="UP000001733">
    <property type="component" value="Chromosome"/>
</dbReference>
<dbReference type="GO" id="GO:0043590">
    <property type="term" value="C:bacterial nucleoid"/>
    <property type="evidence" value="ECO:0007669"/>
    <property type="project" value="UniProtKB-UniRule"/>
</dbReference>
<dbReference type="GO" id="GO:0005829">
    <property type="term" value="C:cytosol"/>
    <property type="evidence" value="ECO:0007669"/>
    <property type="project" value="TreeGrafter"/>
</dbReference>
<dbReference type="GO" id="GO:0003677">
    <property type="term" value="F:DNA binding"/>
    <property type="evidence" value="ECO:0007669"/>
    <property type="project" value="UniProtKB-UniRule"/>
</dbReference>
<dbReference type="FunFam" id="3.30.1310.10:FF:000015">
    <property type="entry name" value="Nucleoid-associated protein DICTH_1981"/>
    <property type="match status" value="1"/>
</dbReference>
<dbReference type="Gene3D" id="3.30.1310.10">
    <property type="entry name" value="Nucleoid-associated protein YbaB-like domain"/>
    <property type="match status" value="1"/>
</dbReference>
<dbReference type="HAMAP" id="MF_00274">
    <property type="entry name" value="DNA_YbaB_EbfC"/>
    <property type="match status" value="1"/>
</dbReference>
<dbReference type="InterPro" id="IPR036894">
    <property type="entry name" value="YbaB-like_sf"/>
</dbReference>
<dbReference type="InterPro" id="IPR004401">
    <property type="entry name" value="YbaB/EbfC"/>
</dbReference>
<dbReference type="NCBIfam" id="TIGR00103">
    <property type="entry name" value="DNA_YbaB_EbfC"/>
    <property type="match status" value="1"/>
</dbReference>
<dbReference type="PANTHER" id="PTHR33449">
    <property type="entry name" value="NUCLEOID-ASSOCIATED PROTEIN YBAB"/>
    <property type="match status" value="1"/>
</dbReference>
<dbReference type="PANTHER" id="PTHR33449:SF1">
    <property type="entry name" value="NUCLEOID-ASSOCIATED PROTEIN YBAB"/>
    <property type="match status" value="1"/>
</dbReference>
<dbReference type="Pfam" id="PF02575">
    <property type="entry name" value="YbaB_DNA_bd"/>
    <property type="match status" value="1"/>
</dbReference>
<dbReference type="PIRSF" id="PIRSF004555">
    <property type="entry name" value="UCP004555"/>
    <property type="match status" value="1"/>
</dbReference>
<dbReference type="SUPFAM" id="SSF82607">
    <property type="entry name" value="YbaB-like"/>
    <property type="match status" value="1"/>
</dbReference>
<protein>
    <recommendedName>
        <fullName evidence="1">Nucleoid-associated protein DICTH_1981</fullName>
    </recommendedName>
</protein>
<organism>
    <name type="scientific">Dictyoglomus thermophilum (strain ATCC 35947 / DSM 3960 / H-6-12)</name>
    <dbReference type="NCBI Taxonomy" id="309799"/>
    <lineage>
        <taxon>Bacteria</taxon>
        <taxon>Pseudomonadati</taxon>
        <taxon>Dictyoglomota</taxon>
        <taxon>Dictyoglomia</taxon>
        <taxon>Dictyoglomales</taxon>
        <taxon>Dictyoglomaceae</taxon>
        <taxon>Dictyoglomus</taxon>
    </lineage>
</organism>
<name>Y1981_DICT6</name>
<comment type="function">
    <text evidence="1">Binds to DNA and alters its conformation. May be involved in regulation of gene expression, nucleoid organization and DNA protection.</text>
</comment>
<comment type="subunit">
    <text evidence="1">Homodimer.</text>
</comment>
<comment type="subcellular location">
    <subcellularLocation>
        <location evidence="1">Cytoplasm</location>
        <location evidence="1">Nucleoid</location>
    </subcellularLocation>
</comment>
<comment type="similarity">
    <text evidence="1">Belongs to the YbaB/EbfC family.</text>
</comment>
<gene>
    <name type="ordered locus">DICTH_1981</name>
</gene>
<reference key="1">
    <citation type="journal article" date="2014" name="Genome Announc.">
        <title>Complete Genome Sequence of the Extreme Thermophile Dictyoglomus thermophilum H-6-12.</title>
        <authorList>
            <person name="Coil D.A."/>
            <person name="Badger J.H."/>
            <person name="Forberger H.C."/>
            <person name="Riggs F."/>
            <person name="Madupu R."/>
            <person name="Fedorova N."/>
            <person name="Ward N."/>
            <person name="Robb F.T."/>
            <person name="Eisen J.A."/>
        </authorList>
    </citation>
    <scope>NUCLEOTIDE SEQUENCE [LARGE SCALE GENOMIC DNA]</scope>
    <source>
        <strain>ATCC 35947 / DSM 3960 / H-6-12</strain>
    </source>
</reference>
<feature type="chain" id="PRO_1000119316" description="Nucleoid-associated protein DICTH_1981">
    <location>
        <begin position="1"/>
        <end position="104"/>
    </location>
</feature>
<feature type="region of interest" description="Disordered" evidence="2">
    <location>
        <begin position="85"/>
        <end position="104"/>
    </location>
</feature>
<keyword id="KW-0963">Cytoplasm</keyword>
<keyword id="KW-0238">DNA-binding</keyword>